<reference key="1">
    <citation type="journal article" date="2002" name="Am. J. Bot.">
        <title>Monophyly of the Convolvulaceae and circumscription of their major lineages based on DNA sequences of multiple chloroplast loci.</title>
        <authorList>
            <person name="Stefanovic S."/>
            <person name="Krueger L."/>
            <person name="Olmstead R.G."/>
        </authorList>
        <dbReference type="AGRICOLA" id="IND23320510"/>
    </citation>
    <scope>NUCLEOTIDE SEQUENCE [GENOMIC DNA]</scope>
</reference>
<proteinExistence type="inferred from homology"/>
<sequence length="490" mass="52848">MRSNPTTSGSEVSAVEKKNLGRIVKIIGPVLDVAFPPGKMPNIYNALVVQGRDNEQTNVTCEVQQLLGNNRVRAVAMSDTDGLMRGMAVINTGAPISVPVGGSTLGRIFNVLGQPVDNLGPVDTNTTSPIHRSAPAFIQLDTKLSIFETGIKVVDLLAPYRRGGKIGLFGGAGVGKTVLIMELINNIAKAHGGVSVFGGVGERTREGNDLYMEMKESGVINEENIAESKVALVYGQMNEPPGARMRVGLTALTMAEYFRDVNEQDVLLFIDNIFRFVQAGSEVSALLGRMPSAVGYQPTLSTEMGTLQERITSTKEGSITSIQAVYVPADDLTDPAPATTFAHLDATTVLSRGLAAKGIYPAVDPLDSTSTMLQPRIVGEEHYETAQRVKQTLQRYKELQDIIAILGLDELSEEDRLTVARARKIERFLSQPFFVAEVFTGSPGKYVGLAETIRGFQLILSGELDVLPEQAFYLVGNIDEATAKAMNLKT</sequence>
<evidence type="ECO:0000255" key="1">
    <source>
        <dbReference type="HAMAP-Rule" id="MF_01347"/>
    </source>
</evidence>
<comment type="function">
    <text evidence="1">Produces ATP from ADP in the presence of a proton gradient across the membrane. The catalytic sites are hosted primarily by the beta subunits.</text>
</comment>
<comment type="catalytic activity">
    <reaction evidence="1">
        <text>ATP + H2O + 4 H(+)(in) = ADP + phosphate + 5 H(+)(out)</text>
        <dbReference type="Rhea" id="RHEA:57720"/>
        <dbReference type="ChEBI" id="CHEBI:15377"/>
        <dbReference type="ChEBI" id="CHEBI:15378"/>
        <dbReference type="ChEBI" id="CHEBI:30616"/>
        <dbReference type="ChEBI" id="CHEBI:43474"/>
        <dbReference type="ChEBI" id="CHEBI:456216"/>
        <dbReference type="EC" id="7.1.2.2"/>
    </reaction>
</comment>
<comment type="subunit">
    <text evidence="1">F-type ATPases have 2 components, CF(1) - the catalytic core - and CF(0) - the membrane proton channel. CF(1) has five subunits: alpha(3), beta(3), gamma(1), delta(1), epsilon(1). CF(0) has four main subunits: a(1), b(1), b'(1) and c(9-12).</text>
</comment>
<comment type="subcellular location">
    <subcellularLocation>
        <location evidence="1">Plastid</location>
        <location evidence="1">Chloroplast thylakoid membrane</location>
        <topology evidence="1">Peripheral membrane protein</topology>
    </subcellularLocation>
</comment>
<comment type="similarity">
    <text evidence="1">Belongs to the ATPase alpha/beta chains family.</text>
</comment>
<name>ATPB_CONAR</name>
<geneLocation type="chloroplast"/>
<organism>
    <name type="scientific">Convolvulus arvensis</name>
    <name type="common">Field bindweed</name>
    <name type="synonym">Strophocaulos arvensis</name>
    <dbReference type="NCBI Taxonomy" id="4123"/>
    <lineage>
        <taxon>Eukaryota</taxon>
        <taxon>Viridiplantae</taxon>
        <taxon>Streptophyta</taxon>
        <taxon>Embryophyta</taxon>
        <taxon>Tracheophyta</taxon>
        <taxon>Spermatophyta</taxon>
        <taxon>Magnoliopsida</taxon>
        <taxon>eudicotyledons</taxon>
        <taxon>Gunneridae</taxon>
        <taxon>Pentapetalae</taxon>
        <taxon>asterids</taxon>
        <taxon>lamiids</taxon>
        <taxon>Solanales</taxon>
        <taxon>Convolvulaceae</taxon>
        <taxon>Convolvuleae</taxon>
        <taxon>Convolvulus</taxon>
    </lineage>
</organism>
<feature type="chain" id="PRO_0000254462" description="ATP synthase subunit beta, chloroplastic">
    <location>
        <begin position="1"/>
        <end position="490"/>
    </location>
</feature>
<feature type="binding site" evidence="1">
    <location>
        <begin position="170"/>
        <end position="177"/>
    </location>
    <ligand>
        <name>ATP</name>
        <dbReference type="ChEBI" id="CHEBI:30616"/>
    </ligand>
</feature>
<gene>
    <name evidence="1" type="primary">atpB</name>
</gene>
<accession>Q8MBM3</accession>
<protein>
    <recommendedName>
        <fullName evidence="1">ATP synthase subunit beta, chloroplastic</fullName>
        <ecNumber evidence="1">7.1.2.2</ecNumber>
    </recommendedName>
    <alternativeName>
        <fullName evidence="1">ATP synthase F1 sector subunit beta</fullName>
    </alternativeName>
    <alternativeName>
        <fullName evidence="1">F-ATPase subunit beta</fullName>
    </alternativeName>
</protein>
<keyword id="KW-0066">ATP synthesis</keyword>
<keyword id="KW-0067">ATP-binding</keyword>
<keyword id="KW-0139">CF(1)</keyword>
<keyword id="KW-0150">Chloroplast</keyword>
<keyword id="KW-0375">Hydrogen ion transport</keyword>
<keyword id="KW-0406">Ion transport</keyword>
<keyword id="KW-0472">Membrane</keyword>
<keyword id="KW-0547">Nucleotide-binding</keyword>
<keyword id="KW-0934">Plastid</keyword>
<keyword id="KW-0793">Thylakoid</keyword>
<keyword id="KW-1278">Translocase</keyword>
<keyword id="KW-0813">Transport</keyword>
<dbReference type="EC" id="7.1.2.2" evidence="1"/>
<dbReference type="EMBL" id="AY100784">
    <property type="protein sequence ID" value="AAM52138.1"/>
    <property type="molecule type" value="Genomic_DNA"/>
</dbReference>
<dbReference type="RefSeq" id="YP_010042687.1">
    <property type="nucleotide sequence ID" value="NC_054224.1"/>
</dbReference>
<dbReference type="SMR" id="Q8MBM3"/>
<dbReference type="GeneID" id="63649898"/>
<dbReference type="GO" id="GO:0009535">
    <property type="term" value="C:chloroplast thylakoid membrane"/>
    <property type="evidence" value="ECO:0007669"/>
    <property type="project" value="UniProtKB-SubCell"/>
</dbReference>
<dbReference type="GO" id="GO:0005739">
    <property type="term" value="C:mitochondrion"/>
    <property type="evidence" value="ECO:0007669"/>
    <property type="project" value="GOC"/>
</dbReference>
<dbReference type="GO" id="GO:0045259">
    <property type="term" value="C:proton-transporting ATP synthase complex"/>
    <property type="evidence" value="ECO:0007669"/>
    <property type="project" value="UniProtKB-KW"/>
</dbReference>
<dbReference type="GO" id="GO:0005524">
    <property type="term" value="F:ATP binding"/>
    <property type="evidence" value="ECO:0007669"/>
    <property type="project" value="UniProtKB-UniRule"/>
</dbReference>
<dbReference type="GO" id="GO:0016887">
    <property type="term" value="F:ATP hydrolysis activity"/>
    <property type="evidence" value="ECO:0007669"/>
    <property type="project" value="InterPro"/>
</dbReference>
<dbReference type="GO" id="GO:0046933">
    <property type="term" value="F:proton-transporting ATP synthase activity, rotational mechanism"/>
    <property type="evidence" value="ECO:0007669"/>
    <property type="project" value="UniProtKB-UniRule"/>
</dbReference>
<dbReference type="GO" id="GO:0042776">
    <property type="term" value="P:proton motive force-driven mitochondrial ATP synthesis"/>
    <property type="evidence" value="ECO:0007669"/>
    <property type="project" value="TreeGrafter"/>
</dbReference>
<dbReference type="CDD" id="cd18110">
    <property type="entry name" value="ATP-synt_F1_beta_C"/>
    <property type="match status" value="1"/>
</dbReference>
<dbReference type="CDD" id="cd18115">
    <property type="entry name" value="ATP-synt_F1_beta_N"/>
    <property type="match status" value="1"/>
</dbReference>
<dbReference type="CDD" id="cd01133">
    <property type="entry name" value="F1-ATPase_beta_CD"/>
    <property type="match status" value="1"/>
</dbReference>
<dbReference type="FunFam" id="1.10.1140.10:FF:000001">
    <property type="entry name" value="ATP synthase subunit beta"/>
    <property type="match status" value="1"/>
</dbReference>
<dbReference type="FunFam" id="3.40.50.12240:FF:000006">
    <property type="entry name" value="ATP synthase subunit beta"/>
    <property type="match status" value="1"/>
</dbReference>
<dbReference type="FunFam" id="3.40.50.300:FF:000004">
    <property type="entry name" value="ATP synthase subunit beta"/>
    <property type="match status" value="1"/>
</dbReference>
<dbReference type="FunFam" id="2.40.10.170:FF:000002">
    <property type="entry name" value="ATP synthase subunit beta, chloroplastic"/>
    <property type="match status" value="1"/>
</dbReference>
<dbReference type="Gene3D" id="2.40.10.170">
    <property type="match status" value="1"/>
</dbReference>
<dbReference type="Gene3D" id="1.10.1140.10">
    <property type="entry name" value="Bovine Mitochondrial F1-atpase, Atp Synthase Beta Chain, Chain D, domain 3"/>
    <property type="match status" value="1"/>
</dbReference>
<dbReference type="Gene3D" id="3.40.50.300">
    <property type="entry name" value="P-loop containing nucleotide triphosphate hydrolases"/>
    <property type="match status" value="1"/>
</dbReference>
<dbReference type="HAMAP" id="MF_01347">
    <property type="entry name" value="ATP_synth_beta_bact"/>
    <property type="match status" value="1"/>
</dbReference>
<dbReference type="InterPro" id="IPR003593">
    <property type="entry name" value="AAA+_ATPase"/>
</dbReference>
<dbReference type="InterPro" id="IPR055190">
    <property type="entry name" value="ATP-synt_VA_C"/>
</dbReference>
<dbReference type="InterPro" id="IPR005722">
    <property type="entry name" value="ATP_synth_F1_bsu"/>
</dbReference>
<dbReference type="InterPro" id="IPR020003">
    <property type="entry name" value="ATPase_a/bsu_AS"/>
</dbReference>
<dbReference type="InterPro" id="IPR050053">
    <property type="entry name" value="ATPase_alpha/beta_chains"/>
</dbReference>
<dbReference type="InterPro" id="IPR004100">
    <property type="entry name" value="ATPase_F1/V1/A1_a/bsu_N"/>
</dbReference>
<dbReference type="InterPro" id="IPR036121">
    <property type="entry name" value="ATPase_F1/V1/A1_a/bsu_N_sf"/>
</dbReference>
<dbReference type="InterPro" id="IPR000194">
    <property type="entry name" value="ATPase_F1/V1/A1_a/bsu_nucl-bd"/>
</dbReference>
<dbReference type="InterPro" id="IPR024034">
    <property type="entry name" value="ATPase_F1/V1_b/a_C"/>
</dbReference>
<dbReference type="InterPro" id="IPR027417">
    <property type="entry name" value="P-loop_NTPase"/>
</dbReference>
<dbReference type="NCBIfam" id="TIGR01039">
    <property type="entry name" value="atpD"/>
    <property type="match status" value="1"/>
</dbReference>
<dbReference type="PANTHER" id="PTHR15184">
    <property type="entry name" value="ATP SYNTHASE"/>
    <property type="match status" value="1"/>
</dbReference>
<dbReference type="PANTHER" id="PTHR15184:SF71">
    <property type="entry name" value="ATP SYNTHASE SUBUNIT BETA, MITOCHONDRIAL"/>
    <property type="match status" value="1"/>
</dbReference>
<dbReference type="Pfam" id="PF00006">
    <property type="entry name" value="ATP-synt_ab"/>
    <property type="match status" value="1"/>
</dbReference>
<dbReference type="Pfam" id="PF02874">
    <property type="entry name" value="ATP-synt_ab_N"/>
    <property type="match status" value="1"/>
</dbReference>
<dbReference type="Pfam" id="PF22919">
    <property type="entry name" value="ATP-synt_VA_C"/>
    <property type="match status" value="1"/>
</dbReference>
<dbReference type="SMART" id="SM00382">
    <property type="entry name" value="AAA"/>
    <property type="match status" value="1"/>
</dbReference>
<dbReference type="SUPFAM" id="SSF47917">
    <property type="entry name" value="C-terminal domain of alpha and beta subunits of F1 ATP synthase"/>
    <property type="match status" value="1"/>
</dbReference>
<dbReference type="SUPFAM" id="SSF50615">
    <property type="entry name" value="N-terminal domain of alpha and beta subunits of F1 ATP synthase"/>
    <property type="match status" value="1"/>
</dbReference>
<dbReference type="SUPFAM" id="SSF52540">
    <property type="entry name" value="P-loop containing nucleoside triphosphate hydrolases"/>
    <property type="match status" value="1"/>
</dbReference>
<dbReference type="PROSITE" id="PS00152">
    <property type="entry name" value="ATPASE_ALPHA_BETA"/>
    <property type="match status" value="1"/>
</dbReference>